<organism>
    <name type="scientific">Mycoplasma pneumoniae (strain ATCC 29342 / M129 / Subtype 1)</name>
    <name type="common">Mycoplasmoides pneumoniae</name>
    <dbReference type="NCBI Taxonomy" id="272634"/>
    <lineage>
        <taxon>Bacteria</taxon>
        <taxon>Bacillati</taxon>
        <taxon>Mycoplasmatota</taxon>
        <taxon>Mycoplasmoidales</taxon>
        <taxon>Mycoplasmoidaceae</taxon>
        <taxon>Mycoplasmoides</taxon>
    </lineage>
</organism>
<reference key="1">
    <citation type="journal article" date="1996" name="Nucleic Acids Res.">
        <title>Complete sequence analysis of the genome of the bacterium Mycoplasma pneumoniae.</title>
        <authorList>
            <person name="Himmelreich R."/>
            <person name="Hilbert H."/>
            <person name="Plagens H."/>
            <person name="Pirkl E."/>
            <person name="Li B.-C."/>
            <person name="Herrmann R."/>
        </authorList>
    </citation>
    <scope>NUCLEOTIDE SEQUENCE [LARGE SCALE GENOMIC DNA]</scope>
    <source>
        <strain>ATCC 29342 / M129 / Subtype 1</strain>
    </source>
</reference>
<proteinExistence type="inferred from homology"/>
<comment type="similarity">
    <text evidence="2">Belongs to the carnitine/choline acetyltransferase family.</text>
</comment>
<name>Y114_MYCPN</name>
<dbReference type="EC" id="2.3.1.-"/>
<dbReference type="EMBL" id="U00089">
    <property type="protein sequence ID" value="AAB95688.1"/>
    <property type="molecule type" value="Genomic_DNA"/>
</dbReference>
<dbReference type="PIR" id="S73366">
    <property type="entry name" value="S73366"/>
</dbReference>
<dbReference type="RefSeq" id="NP_109802.1">
    <property type="nucleotide sequence ID" value="NC_000912.1"/>
</dbReference>
<dbReference type="RefSeq" id="WP_010874471.1">
    <property type="nucleotide sequence ID" value="NZ_OU342337.1"/>
</dbReference>
<dbReference type="SMR" id="P75448"/>
<dbReference type="IntAct" id="P75448">
    <property type="interactions" value="1"/>
</dbReference>
<dbReference type="STRING" id="272634.MPN_114"/>
<dbReference type="EnsemblBacteria" id="AAB95688">
    <property type="protein sequence ID" value="AAB95688"/>
    <property type="gene ID" value="MPN_114"/>
</dbReference>
<dbReference type="KEGG" id="mpn:MPN_114"/>
<dbReference type="PATRIC" id="fig|272634.6.peg.121"/>
<dbReference type="HOGENOM" id="CLU_013513_5_1_14"/>
<dbReference type="OrthoDB" id="1456at2"/>
<dbReference type="BioCyc" id="MPNE272634:G1GJ3-192-MONOMER"/>
<dbReference type="Proteomes" id="UP000000808">
    <property type="component" value="Chromosome"/>
</dbReference>
<dbReference type="GO" id="GO:0016746">
    <property type="term" value="F:acyltransferase activity"/>
    <property type="evidence" value="ECO:0007669"/>
    <property type="project" value="UniProtKB-KW"/>
</dbReference>
<dbReference type="Gene3D" id="3.30.559.10">
    <property type="entry name" value="Chloramphenicol acetyltransferase-like domain"/>
    <property type="match status" value="1"/>
</dbReference>
<dbReference type="Gene3D" id="3.30.559.70">
    <property type="entry name" value="Choline/Carnitine o-acyltransferase, domain 2"/>
    <property type="match status" value="1"/>
</dbReference>
<dbReference type="InterPro" id="IPR000542">
    <property type="entry name" value="Carn_acyl_trans"/>
</dbReference>
<dbReference type="InterPro" id="IPR023213">
    <property type="entry name" value="CAT-like_dom_sf"/>
</dbReference>
<dbReference type="InterPro" id="IPR039551">
    <property type="entry name" value="Cho/carn_acyl_trans"/>
</dbReference>
<dbReference type="InterPro" id="IPR042231">
    <property type="entry name" value="Cho/carn_acyl_trans_2"/>
</dbReference>
<dbReference type="PANTHER" id="PTHR22589">
    <property type="entry name" value="CARNITINE O-ACYLTRANSFERASE"/>
    <property type="match status" value="1"/>
</dbReference>
<dbReference type="Pfam" id="PF00755">
    <property type="entry name" value="Carn_acyltransf"/>
    <property type="match status" value="1"/>
</dbReference>
<dbReference type="SUPFAM" id="SSF52777">
    <property type="entry name" value="CoA-dependent acyltransferases"/>
    <property type="match status" value="2"/>
</dbReference>
<dbReference type="PROSITE" id="PS00440">
    <property type="entry name" value="ACYLTRANSF_C_2"/>
    <property type="match status" value="1"/>
</dbReference>
<gene>
    <name type="ordered locus">MPN_114</name>
    <name type="ORF">C09_orf600</name>
    <name type="ORF">MP040</name>
</gene>
<protein>
    <recommendedName>
        <fullName>Putative acetyltransferase MPN_114</fullName>
        <ecNumber>2.3.1.-</ecNumber>
    </recommendedName>
</protein>
<keyword id="KW-0012">Acyltransferase</keyword>
<keyword id="KW-1185">Reference proteome</keyword>
<keyword id="KW-0808">Transferase</keyword>
<evidence type="ECO:0000255" key="1"/>
<evidence type="ECO:0000305" key="2"/>
<accession>P75448</accession>
<feature type="chain" id="PRO_0000210177" description="Putative acetyltransferase MPN_114">
    <location>
        <begin position="1"/>
        <end position="600"/>
    </location>
</feature>
<feature type="active site" description="Proton acceptor" evidence="1">
    <location>
        <position position="323"/>
    </location>
</feature>
<feature type="binding site" evidence="1">
    <location>
        <begin position="396"/>
        <end position="409"/>
    </location>
    <ligand>
        <name>CoA</name>
        <dbReference type="ChEBI" id="CHEBI:57287"/>
    </ligand>
</feature>
<sequence length="600" mass="68887">MDTKLTPPWLRQENNLLNPEVTQRLFINQDNIPNLPTEAPQVYLARFLEWVEPLVSKVKFVKAQAAVQDYLNSKACAQIETIIAERAQNTHSSWLANWWVQYAYLTSTGPVSPEVNAPYYLELPTVGWSQAELAAALSAQLWHIYQQVQKRQLTSFSVKDKLFSLDTLQSIFASCQIHRADGDVYFVNDQPANFIVVIKNNVFYKLVIDNSGSLEQLQAQLQLSFVQILDNELSHPPHWNLLTATTTKAESQSLLDQLWAQNPEMLLDIYNSAFIVNLDNVELTTPLQLLRNSTWTPNFNRWHAKGIQLVITKNAQLVILADHTSFDGSSVATLANIFVSKLQKVNTEGASALTPTMLSFPTVDQDKQKYFKQLSKNFKDYVYNAVMFELKWDWFTKPLIKAKGIKNSEAFIHLCYQIAQYQTNKKLQNTYVAVDMRQYFRGRTECLRPLSKQSVAFVKRYCKDPKGTLKQFRKYYPAIESLHFEKTRLAQKGSGVNRHLLGAYLAWNEHQDTIAKPALFETKAWKTIAANPLSTSSIVDKYLRNFSFDPVEPNGIGIAYAIDDTNFRAILSVYQHNLQYLKDWMKHFEQTVKTILKTLK</sequence>